<proteinExistence type="inferred from homology"/>
<comment type="function">
    <text evidence="1">Catalyzes the reversible conversion of 2-phosphoglycerate (2-PG) into phosphoenolpyruvate (PEP). It is essential for the degradation of carbohydrates via glycolysis.</text>
</comment>
<comment type="catalytic activity">
    <reaction evidence="1">
        <text>(2R)-2-phosphoglycerate = phosphoenolpyruvate + H2O</text>
        <dbReference type="Rhea" id="RHEA:10164"/>
        <dbReference type="ChEBI" id="CHEBI:15377"/>
        <dbReference type="ChEBI" id="CHEBI:58289"/>
        <dbReference type="ChEBI" id="CHEBI:58702"/>
        <dbReference type="EC" id="4.2.1.11"/>
    </reaction>
</comment>
<comment type="cofactor">
    <cofactor evidence="1">
        <name>Mg(2+)</name>
        <dbReference type="ChEBI" id="CHEBI:18420"/>
    </cofactor>
    <text evidence="1">Binds a second Mg(2+) ion via substrate during catalysis.</text>
</comment>
<comment type="pathway">
    <text evidence="1">Carbohydrate degradation; glycolysis; pyruvate from D-glyceraldehyde 3-phosphate: step 4/5.</text>
</comment>
<comment type="subcellular location">
    <subcellularLocation>
        <location evidence="1">Cytoplasm</location>
    </subcellularLocation>
    <subcellularLocation>
        <location evidence="1">Secreted</location>
    </subcellularLocation>
    <subcellularLocation>
        <location evidence="1">Cell surface</location>
    </subcellularLocation>
    <text evidence="1">Fractions of enolase are present in both the cytoplasm and on the cell surface.</text>
</comment>
<comment type="similarity">
    <text evidence="1">Belongs to the enolase family.</text>
</comment>
<gene>
    <name evidence="1" type="primary">eno</name>
    <name type="ordered locus">CHY_0284</name>
</gene>
<organism>
    <name type="scientific">Carboxydothermus hydrogenoformans (strain ATCC BAA-161 / DSM 6008 / Z-2901)</name>
    <dbReference type="NCBI Taxonomy" id="246194"/>
    <lineage>
        <taxon>Bacteria</taxon>
        <taxon>Bacillati</taxon>
        <taxon>Bacillota</taxon>
        <taxon>Clostridia</taxon>
        <taxon>Thermoanaerobacterales</taxon>
        <taxon>Thermoanaerobacteraceae</taxon>
        <taxon>Carboxydothermus</taxon>
    </lineage>
</organism>
<name>ENO_CARHZ</name>
<dbReference type="EC" id="4.2.1.11" evidence="1"/>
<dbReference type="EMBL" id="CP000141">
    <property type="protein sequence ID" value="ABB13754.1"/>
    <property type="molecule type" value="Genomic_DNA"/>
</dbReference>
<dbReference type="RefSeq" id="WP_011343232.1">
    <property type="nucleotide sequence ID" value="NC_007503.1"/>
</dbReference>
<dbReference type="SMR" id="Q3AFC8"/>
<dbReference type="FunCoup" id="Q3AFC8">
    <property type="interactions" value="347"/>
</dbReference>
<dbReference type="STRING" id="246194.CHY_0284"/>
<dbReference type="KEGG" id="chy:CHY_0284"/>
<dbReference type="eggNOG" id="COG0148">
    <property type="taxonomic scope" value="Bacteria"/>
</dbReference>
<dbReference type="HOGENOM" id="CLU_031223_2_1_9"/>
<dbReference type="InParanoid" id="Q3AFC8"/>
<dbReference type="OrthoDB" id="9804716at2"/>
<dbReference type="UniPathway" id="UPA00109">
    <property type="reaction ID" value="UER00187"/>
</dbReference>
<dbReference type="Proteomes" id="UP000002706">
    <property type="component" value="Chromosome"/>
</dbReference>
<dbReference type="GO" id="GO:0009986">
    <property type="term" value="C:cell surface"/>
    <property type="evidence" value="ECO:0007669"/>
    <property type="project" value="UniProtKB-SubCell"/>
</dbReference>
<dbReference type="GO" id="GO:0005576">
    <property type="term" value="C:extracellular region"/>
    <property type="evidence" value="ECO:0007669"/>
    <property type="project" value="UniProtKB-SubCell"/>
</dbReference>
<dbReference type="GO" id="GO:0000015">
    <property type="term" value="C:phosphopyruvate hydratase complex"/>
    <property type="evidence" value="ECO:0007669"/>
    <property type="project" value="InterPro"/>
</dbReference>
<dbReference type="GO" id="GO:0000287">
    <property type="term" value="F:magnesium ion binding"/>
    <property type="evidence" value="ECO:0007669"/>
    <property type="project" value="UniProtKB-UniRule"/>
</dbReference>
<dbReference type="GO" id="GO:0004634">
    <property type="term" value="F:phosphopyruvate hydratase activity"/>
    <property type="evidence" value="ECO:0007669"/>
    <property type="project" value="UniProtKB-UniRule"/>
</dbReference>
<dbReference type="GO" id="GO:0006096">
    <property type="term" value="P:glycolytic process"/>
    <property type="evidence" value="ECO:0007669"/>
    <property type="project" value="UniProtKB-UniRule"/>
</dbReference>
<dbReference type="CDD" id="cd03313">
    <property type="entry name" value="enolase"/>
    <property type="match status" value="1"/>
</dbReference>
<dbReference type="FunFam" id="3.20.20.120:FF:000001">
    <property type="entry name" value="Enolase"/>
    <property type="match status" value="1"/>
</dbReference>
<dbReference type="FunFam" id="3.30.390.10:FF:000001">
    <property type="entry name" value="Enolase"/>
    <property type="match status" value="1"/>
</dbReference>
<dbReference type="Gene3D" id="3.20.20.120">
    <property type="entry name" value="Enolase-like C-terminal domain"/>
    <property type="match status" value="1"/>
</dbReference>
<dbReference type="Gene3D" id="3.30.390.10">
    <property type="entry name" value="Enolase-like, N-terminal domain"/>
    <property type="match status" value="1"/>
</dbReference>
<dbReference type="HAMAP" id="MF_00318">
    <property type="entry name" value="Enolase"/>
    <property type="match status" value="1"/>
</dbReference>
<dbReference type="InterPro" id="IPR000941">
    <property type="entry name" value="Enolase"/>
</dbReference>
<dbReference type="InterPro" id="IPR036849">
    <property type="entry name" value="Enolase-like_C_sf"/>
</dbReference>
<dbReference type="InterPro" id="IPR029017">
    <property type="entry name" value="Enolase-like_N"/>
</dbReference>
<dbReference type="InterPro" id="IPR020810">
    <property type="entry name" value="Enolase_C"/>
</dbReference>
<dbReference type="InterPro" id="IPR020809">
    <property type="entry name" value="Enolase_CS"/>
</dbReference>
<dbReference type="InterPro" id="IPR020811">
    <property type="entry name" value="Enolase_N"/>
</dbReference>
<dbReference type="NCBIfam" id="TIGR01060">
    <property type="entry name" value="eno"/>
    <property type="match status" value="1"/>
</dbReference>
<dbReference type="PANTHER" id="PTHR11902">
    <property type="entry name" value="ENOLASE"/>
    <property type="match status" value="1"/>
</dbReference>
<dbReference type="PANTHER" id="PTHR11902:SF1">
    <property type="entry name" value="ENOLASE"/>
    <property type="match status" value="1"/>
</dbReference>
<dbReference type="Pfam" id="PF00113">
    <property type="entry name" value="Enolase_C"/>
    <property type="match status" value="1"/>
</dbReference>
<dbReference type="Pfam" id="PF03952">
    <property type="entry name" value="Enolase_N"/>
    <property type="match status" value="1"/>
</dbReference>
<dbReference type="PIRSF" id="PIRSF001400">
    <property type="entry name" value="Enolase"/>
    <property type="match status" value="1"/>
</dbReference>
<dbReference type="PRINTS" id="PR00148">
    <property type="entry name" value="ENOLASE"/>
</dbReference>
<dbReference type="SFLD" id="SFLDS00001">
    <property type="entry name" value="Enolase"/>
    <property type="match status" value="1"/>
</dbReference>
<dbReference type="SFLD" id="SFLDF00002">
    <property type="entry name" value="enolase"/>
    <property type="match status" value="1"/>
</dbReference>
<dbReference type="SMART" id="SM01192">
    <property type="entry name" value="Enolase_C"/>
    <property type="match status" value="1"/>
</dbReference>
<dbReference type="SMART" id="SM01193">
    <property type="entry name" value="Enolase_N"/>
    <property type="match status" value="1"/>
</dbReference>
<dbReference type="SUPFAM" id="SSF51604">
    <property type="entry name" value="Enolase C-terminal domain-like"/>
    <property type="match status" value="1"/>
</dbReference>
<dbReference type="SUPFAM" id="SSF54826">
    <property type="entry name" value="Enolase N-terminal domain-like"/>
    <property type="match status" value="1"/>
</dbReference>
<dbReference type="PROSITE" id="PS00164">
    <property type="entry name" value="ENOLASE"/>
    <property type="match status" value="1"/>
</dbReference>
<accession>Q3AFC8</accession>
<sequence>MSEIREVIAREILDSRGNPTVEVDVILEDGTWGRAAVPSGASTGAFEAVELRDNDPQRYLGKGVTQAVENVNSIIGPEILGFDALDQVGIDEYLIELDGTPNKGKLGANAILGVSMAVAKAAANYLGLPLYRYLGGTNARVLPAPMMNILNGGKHADNNVDIQEFMIMPLGASSFSEALRMGAEVFHNLKKVLKGKGYNTAVGDEGGFAPNLKSNEEAIEVIVEAIEKAGYTPGKDIYIALDVAATELYKDGFYVLEGEGVKKSAAEMVEYYEKLCAKYPIISIEDGMSEEDWDGWKLLTERLGKKIQLVGDDLFVTNVERLQKGIDLGVANSILIKLNQIGTITETLNTIELARQNGYTTIISHRSGETEDTTLADLAVAVNAGMIKTGAPSRTDRVAKYNQLLRIEEELDYTAIYKGLKAFYNIKA</sequence>
<reference key="1">
    <citation type="journal article" date="2005" name="PLoS Genet.">
        <title>Life in hot carbon monoxide: the complete genome sequence of Carboxydothermus hydrogenoformans Z-2901.</title>
        <authorList>
            <person name="Wu M."/>
            <person name="Ren Q."/>
            <person name="Durkin A.S."/>
            <person name="Daugherty S.C."/>
            <person name="Brinkac L.M."/>
            <person name="Dodson R.J."/>
            <person name="Madupu R."/>
            <person name="Sullivan S.A."/>
            <person name="Kolonay J.F."/>
            <person name="Nelson W.C."/>
            <person name="Tallon L.J."/>
            <person name="Jones K.M."/>
            <person name="Ulrich L.E."/>
            <person name="Gonzalez J.M."/>
            <person name="Zhulin I.B."/>
            <person name="Robb F.T."/>
            <person name="Eisen J.A."/>
        </authorList>
    </citation>
    <scope>NUCLEOTIDE SEQUENCE [LARGE SCALE GENOMIC DNA]</scope>
    <source>
        <strain>ATCC BAA-161 / DSM 6008 / Z-2901</strain>
    </source>
</reference>
<keyword id="KW-0963">Cytoplasm</keyword>
<keyword id="KW-0324">Glycolysis</keyword>
<keyword id="KW-0456">Lyase</keyword>
<keyword id="KW-0460">Magnesium</keyword>
<keyword id="KW-0479">Metal-binding</keyword>
<keyword id="KW-1185">Reference proteome</keyword>
<keyword id="KW-0964">Secreted</keyword>
<protein>
    <recommendedName>
        <fullName evidence="1">Enolase</fullName>
        <ecNumber evidence="1">4.2.1.11</ecNumber>
    </recommendedName>
    <alternativeName>
        <fullName evidence="1">2-phospho-D-glycerate hydro-lyase</fullName>
    </alternativeName>
    <alternativeName>
        <fullName evidence="1">2-phosphoglycerate dehydratase</fullName>
    </alternativeName>
</protein>
<evidence type="ECO:0000255" key="1">
    <source>
        <dbReference type="HAMAP-Rule" id="MF_00318"/>
    </source>
</evidence>
<feature type="chain" id="PRO_0000267012" description="Enolase">
    <location>
        <begin position="1"/>
        <end position="428"/>
    </location>
</feature>
<feature type="active site" description="Proton donor" evidence="1">
    <location>
        <position position="205"/>
    </location>
</feature>
<feature type="active site" description="Proton acceptor" evidence="1">
    <location>
        <position position="337"/>
    </location>
</feature>
<feature type="binding site" evidence="1">
    <location>
        <position position="163"/>
    </location>
    <ligand>
        <name>(2R)-2-phosphoglycerate</name>
        <dbReference type="ChEBI" id="CHEBI:58289"/>
    </ligand>
</feature>
<feature type="binding site" evidence="1">
    <location>
        <position position="242"/>
    </location>
    <ligand>
        <name>Mg(2+)</name>
        <dbReference type="ChEBI" id="CHEBI:18420"/>
    </ligand>
</feature>
<feature type="binding site" evidence="1">
    <location>
        <position position="285"/>
    </location>
    <ligand>
        <name>Mg(2+)</name>
        <dbReference type="ChEBI" id="CHEBI:18420"/>
    </ligand>
</feature>
<feature type="binding site" evidence="1">
    <location>
        <position position="312"/>
    </location>
    <ligand>
        <name>Mg(2+)</name>
        <dbReference type="ChEBI" id="CHEBI:18420"/>
    </ligand>
</feature>
<feature type="binding site" evidence="1">
    <location>
        <position position="337"/>
    </location>
    <ligand>
        <name>(2R)-2-phosphoglycerate</name>
        <dbReference type="ChEBI" id="CHEBI:58289"/>
    </ligand>
</feature>
<feature type="binding site" evidence="1">
    <location>
        <position position="366"/>
    </location>
    <ligand>
        <name>(2R)-2-phosphoglycerate</name>
        <dbReference type="ChEBI" id="CHEBI:58289"/>
    </ligand>
</feature>
<feature type="binding site" evidence="1">
    <location>
        <position position="367"/>
    </location>
    <ligand>
        <name>(2R)-2-phosphoglycerate</name>
        <dbReference type="ChEBI" id="CHEBI:58289"/>
    </ligand>
</feature>
<feature type="binding site" evidence="1">
    <location>
        <position position="388"/>
    </location>
    <ligand>
        <name>(2R)-2-phosphoglycerate</name>
        <dbReference type="ChEBI" id="CHEBI:58289"/>
    </ligand>
</feature>